<dbReference type="EC" id="1.14.99.56" evidence="3"/>
<dbReference type="EMBL" id="CH476604">
    <property type="protein sequence ID" value="EAU32052.1"/>
    <property type="molecule type" value="Genomic_DNA"/>
</dbReference>
<dbReference type="RefSeq" id="XP_001216411.1">
    <property type="nucleotide sequence ID" value="XM_001216411.1"/>
</dbReference>
<dbReference type="SMR" id="Q0CEU4"/>
<dbReference type="STRING" id="341663.Q0CEU4"/>
<dbReference type="GlyCosmos" id="Q0CEU4">
    <property type="glycosylation" value="1 site, No reported glycans"/>
</dbReference>
<dbReference type="EnsemblFungi" id="EAU32052">
    <property type="protein sequence ID" value="EAU32052"/>
    <property type="gene ID" value="ATEG_07790"/>
</dbReference>
<dbReference type="GeneID" id="4322940"/>
<dbReference type="VEuPathDB" id="FungiDB:ATEG_07790"/>
<dbReference type="eggNOG" id="ENOG502RXMI">
    <property type="taxonomic scope" value="Eukaryota"/>
</dbReference>
<dbReference type="HOGENOM" id="CLU_031730_0_0_1"/>
<dbReference type="OMA" id="YIDSPPN"/>
<dbReference type="OrthoDB" id="5558646at2759"/>
<dbReference type="Proteomes" id="UP000007963">
    <property type="component" value="Unassembled WGS sequence"/>
</dbReference>
<dbReference type="GO" id="GO:0005576">
    <property type="term" value="C:extracellular region"/>
    <property type="evidence" value="ECO:0007669"/>
    <property type="project" value="UniProtKB-SubCell"/>
</dbReference>
<dbReference type="GO" id="GO:0008810">
    <property type="term" value="F:cellulase activity"/>
    <property type="evidence" value="ECO:0007669"/>
    <property type="project" value="UniProtKB-EC"/>
</dbReference>
<dbReference type="GO" id="GO:0030248">
    <property type="term" value="F:cellulose binding"/>
    <property type="evidence" value="ECO:0007669"/>
    <property type="project" value="InterPro"/>
</dbReference>
<dbReference type="GO" id="GO:0046872">
    <property type="term" value="F:metal ion binding"/>
    <property type="evidence" value="ECO:0007669"/>
    <property type="project" value="UniProtKB-KW"/>
</dbReference>
<dbReference type="GO" id="GO:0004497">
    <property type="term" value="F:monooxygenase activity"/>
    <property type="evidence" value="ECO:0007669"/>
    <property type="project" value="UniProtKB-KW"/>
</dbReference>
<dbReference type="GO" id="GO:0030245">
    <property type="term" value="P:cellulose catabolic process"/>
    <property type="evidence" value="ECO:0007669"/>
    <property type="project" value="UniProtKB-KW"/>
</dbReference>
<dbReference type="CDD" id="cd21175">
    <property type="entry name" value="LPMO_AA9"/>
    <property type="match status" value="1"/>
</dbReference>
<dbReference type="Gene3D" id="2.70.50.70">
    <property type="match status" value="1"/>
</dbReference>
<dbReference type="InterPro" id="IPR049892">
    <property type="entry name" value="AA9"/>
</dbReference>
<dbReference type="InterPro" id="IPR005103">
    <property type="entry name" value="AA9_LPMO"/>
</dbReference>
<dbReference type="InterPro" id="IPR035971">
    <property type="entry name" value="CBD_sf"/>
</dbReference>
<dbReference type="InterPro" id="IPR000254">
    <property type="entry name" value="Cellulose-bd_dom_fun"/>
</dbReference>
<dbReference type="PANTHER" id="PTHR33353:SF17">
    <property type="entry name" value="ENDO-BETA-1,4-GLUCANASE D"/>
    <property type="match status" value="1"/>
</dbReference>
<dbReference type="PANTHER" id="PTHR33353">
    <property type="entry name" value="PUTATIVE (AFU_ORTHOLOGUE AFUA_1G12560)-RELATED"/>
    <property type="match status" value="1"/>
</dbReference>
<dbReference type="Pfam" id="PF03443">
    <property type="entry name" value="AA9"/>
    <property type="match status" value="1"/>
</dbReference>
<dbReference type="Pfam" id="PF00734">
    <property type="entry name" value="CBM_1"/>
    <property type="match status" value="1"/>
</dbReference>
<dbReference type="SMART" id="SM00236">
    <property type="entry name" value="fCBD"/>
    <property type="match status" value="1"/>
</dbReference>
<dbReference type="SUPFAM" id="SSF57180">
    <property type="entry name" value="Cellulose-binding domain"/>
    <property type="match status" value="1"/>
</dbReference>
<dbReference type="PROSITE" id="PS00562">
    <property type="entry name" value="CBM1_1"/>
    <property type="match status" value="1"/>
</dbReference>
<dbReference type="PROSITE" id="PS51164">
    <property type="entry name" value="CBM1_2"/>
    <property type="match status" value="1"/>
</dbReference>
<organism>
    <name type="scientific">Aspergillus terreus (strain NIH 2624 / FGSC A1156)</name>
    <dbReference type="NCBI Taxonomy" id="341663"/>
    <lineage>
        <taxon>Eukaryota</taxon>
        <taxon>Fungi</taxon>
        <taxon>Dikarya</taxon>
        <taxon>Ascomycota</taxon>
        <taxon>Pezizomycotina</taxon>
        <taxon>Eurotiomycetes</taxon>
        <taxon>Eurotiomycetidae</taxon>
        <taxon>Eurotiales</taxon>
        <taxon>Aspergillaceae</taxon>
        <taxon>Aspergillus</taxon>
        <taxon>Aspergillus subgen. Circumdati</taxon>
    </lineage>
</organism>
<name>LP9A_ASPTN</name>
<reference key="1">
    <citation type="submission" date="2005-09" db="EMBL/GenBank/DDBJ databases">
        <title>Annotation of the Aspergillus terreus NIH2624 genome.</title>
        <authorList>
            <person name="Birren B.W."/>
            <person name="Lander E.S."/>
            <person name="Galagan J.E."/>
            <person name="Nusbaum C."/>
            <person name="Devon K."/>
            <person name="Henn M."/>
            <person name="Ma L.-J."/>
            <person name="Jaffe D.B."/>
            <person name="Butler J."/>
            <person name="Alvarez P."/>
            <person name="Gnerre S."/>
            <person name="Grabherr M."/>
            <person name="Kleber M."/>
            <person name="Mauceli E.W."/>
            <person name="Brockman W."/>
            <person name="Rounsley S."/>
            <person name="Young S.K."/>
            <person name="LaButti K."/>
            <person name="Pushparaj V."/>
            <person name="DeCaprio D."/>
            <person name="Crawford M."/>
            <person name="Koehrsen M."/>
            <person name="Engels R."/>
            <person name="Montgomery P."/>
            <person name="Pearson M."/>
            <person name="Howarth C."/>
            <person name="Larson L."/>
            <person name="Luoma S."/>
            <person name="White J."/>
            <person name="Alvarado L."/>
            <person name="Kodira C.D."/>
            <person name="Zeng Q."/>
            <person name="Oleary S."/>
            <person name="Yandava C."/>
            <person name="Denning D.W."/>
            <person name="Nierman W.C."/>
            <person name="Milne T."/>
            <person name="Madden K."/>
        </authorList>
    </citation>
    <scope>NUCLEOTIDE SEQUENCE [LARGE SCALE GENOMIC DNA]</scope>
    <source>
        <strain>NIH 2624 / FGSC A1156</strain>
    </source>
</reference>
<proteinExistence type="inferred from homology"/>
<evidence type="ECO:0000250" key="1">
    <source>
        <dbReference type="UniProtKB" id="A0A223GEC9"/>
    </source>
</evidence>
<evidence type="ECO:0000250" key="2">
    <source>
        <dbReference type="UniProtKB" id="Q1K8B6"/>
    </source>
</evidence>
<evidence type="ECO:0000250" key="3">
    <source>
        <dbReference type="UniProtKB" id="Q2US83"/>
    </source>
</evidence>
<evidence type="ECO:0000250" key="4">
    <source>
        <dbReference type="UniProtKB" id="Q4WP32"/>
    </source>
</evidence>
<evidence type="ECO:0000250" key="5">
    <source>
        <dbReference type="UniProtKB" id="Q7S439"/>
    </source>
</evidence>
<evidence type="ECO:0000255" key="6"/>
<evidence type="ECO:0000255" key="7">
    <source>
        <dbReference type="PROSITE-ProRule" id="PRU00597"/>
    </source>
</evidence>
<evidence type="ECO:0000256" key="8">
    <source>
        <dbReference type="SAM" id="MobiDB-lite"/>
    </source>
</evidence>
<evidence type="ECO:0000305" key="9"/>
<sequence length="360" mass="36795">MKTSFGLLALAAAAKLVNAHATVFAVWINDEDQGLGNTADGYIRSPPNNSPVTDVTSKDMTCNVNGATAAAKTLDVKAGDKITFEWHHNSRDASDDIIASSHLGPVMVYMAPTEKGSAGSGWVKIAEDGYSNGKWAVDTLIANRGKHSITVPDVPAGEYLFRPEIIALHEGNREGGAQLYMECVQVKVTSDGSKTLPEGVSIPGTYTATDPGILFDIYNSFDSYPIPGPAVWDGSSSGSSSGSSKTTAAAPAATSAASASSTKAPATTAAPVQTESAKPATSTTQAAAPTTLVTSAKPTATATAGAGDSGSGSCSATAPATGVVKMYAQCGGMNYSGSTTCESGLTCKQWNPYYHQCVKA</sequence>
<gene>
    <name type="primary">eglD</name>
    <name type="ORF">ATEG_07790</name>
</gene>
<keyword id="KW-0119">Carbohydrate metabolism</keyword>
<keyword id="KW-0136">Cellulose degradation</keyword>
<keyword id="KW-0186">Copper</keyword>
<keyword id="KW-1015">Disulfide bond</keyword>
<keyword id="KW-0325">Glycoprotein</keyword>
<keyword id="KW-0479">Metal-binding</keyword>
<keyword id="KW-0503">Monooxygenase</keyword>
<keyword id="KW-0560">Oxidoreductase</keyword>
<keyword id="KW-0624">Polysaccharide degradation</keyword>
<keyword id="KW-1185">Reference proteome</keyword>
<keyword id="KW-0964">Secreted</keyword>
<keyword id="KW-0732">Signal</keyword>
<accession>Q0CEU4</accession>
<protein>
    <recommendedName>
        <fullName evidence="3">AA9 family lytic polysaccharide monooxygenase A</fullName>
        <shortName evidence="3">AA9A</shortName>
        <ecNumber evidence="3">1.14.99.56</ecNumber>
    </recommendedName>
    <alternativeName>
        <fullName evidence="9">Cellulase AA9A</fullName>
    </alternativeName>
    <alternativeName>
        <fullName evidence="9">Endo-beta-1,4-glucanase AA9A</fullName>
        <shortName evidence="9">Endoglucanase AA9A</shortName>
    </alternativeName>
    <alternativeName>
        <fullName evidence="9">Glycosyl hydrolase 61 family protein AA9A</fullName>
    </alternativeName>
</protein>
<comment type="function">
    <text evidence="3">Lytic polysaccharide monooxygenase (LPMO) that depolymerizes crystalline and amorphous polysaccharides via the oxidation of scissile alpha- or beta-(1-4)-glycosidic bonds, yielding C4 oxidation products (By similarity). Catalysis by LPMOs requires the reduction of the active-site copper from Cu(II) to Cu(I) by a reducing agent and H(2)O(2) or O(2) as a cosubstrate (By similarity).</text>
</comment>
<comment type="catalytic activity">
    <reaction evidence="3">
        <text>[(1-&gt;4)-beta-D-glucosyl]n+m + reduced acceptor + O2 = 4-dehydro-beta-D-glucosyl-[(1-&gt;4)-beta-D-glucosyl]n-1 + [(1-&gt;4)-beta-D-glucosyl]m + acceptor + H2O.</text>
        <dbReference type="EC" id="1.14.99.56"/>
    </reaction>
</comment>
<comment type="cofactor">
    <cofactor evidence="4">
        <name>Cu(2+)</name>
        <dbReference type="ChEBI" id="CHEBI:29036"/>
    </cofactor>
    <text evidence="4">Binds 1 copper ion per subunit.</text>
</comment>
<comment type="subcellular location">
    <subcellularLocation>
        <location evidence="3">Secreted</location>
    </subcellularLocation>
</comment>
<comment type="domain">
    <text evidence="5">Has a modular structure: an endo-beta-1,4-glucanase catalytic module at the N-terminus, a linker rich in serines and threonines, and a C-terminal carbohydrate-binding module (CBM). The CBM domain is essential for binding to and subsequent oxidative degradation of polysaccharide substrate.</text>
</comment>
<comment type="biotechnology">
    <text evidence="4">Lignocellulose is the most abundant polymeric composite on Earth and is a recalcitrant but promising renewable substrate for industrial biotechnology applications. Together with cellobiose dehydrogenases (CDHs) an enzymatic system capable of oxidative cellulose cleavage is formed, which increases the efficiency of cellulases and put LPMOs at focus of biofuel research.</text>
</comment>
<comment type="similarity">
    <text evidence="9">Belongs to the polysaccharide monooxygenase AA9 family.</text>
</comment>
<feature type="signal peptide" evidence="6">
    <location>
        <begin position="1"/>
        <end position="19"/>
    </location>
</feature>
<feature type="chain" id="PRO_0000394066" description="AA9 family lytic polysaccharide monooxygenase A">
    <location>
        <begin position="20"/>
        <end position="360"/>
    </location>
</feature>
<feature type="domain" description="CBM1" evidence="7">
    <location>
        <begin position="322"/>
        <end position="358"/>
    </location>
</feature>
<feature type="region of interest" description="Disordered" evidence="8">
    <location>
        <begin position="254"/>
        <end position="293"/>
    </location>
</feature>
<feature type="binding site" evidence="1">
    <location>
        <position position="20"/>
    </location>
    <ligand>
        <name>Cu(2+)</name>
        <dbReference type="ChEBI" id="CHEBI:29036"/>
        <note>catalytic</note>
    </ligand>
</feature>
<feature type="binding site" evidence="1">
    <location>
        <position position="102"/>
    </location>
    <ligand>
        <name>Cu(2+)</name>
        <dbReference type="ChEBI" id="CHEBI:29036"/>
        <note>catalytic</note>
    </ligand>
</feature>
<feature type="binding site" evidence="2">
    <location>
        <position position="169"/>
    </location>
    <ligand>
        <name>O2</name>
        <dbReference type="ChEBI" id="CHEBI:15379"/>
    </ligand>
</feature>
<feature type="binding site" evidence="1">
    <location>
        <position position="180"/>
    </location>
    <ligand>
        <name>Cu(2+)</name>
        <dbReference type="ChEBI" id="CHEBI:29036"/>
        <note>catalytic</note>
    </ligand>
</feature>
<feature type="glycosylation site" description="N-linked (GlcNAc...) asparagine" evidence="6">
    <location>
        <position position="334"/>
    </location>
</feature>
<feature type="disulfide bond" evidence="1">
    <location>
        <begin position="62"/>
        <end position="183"/>
    </location>
</feature>